<accession>A8H4A4</accession>
<proteinExistence type="inferred from homology"/>
<feature type="chain" id="PRO_1000077999" description="3-phosphoshikimate 1-carboxyvinyltransferase">
    <location>
        <begin position="1"/>
        <end position="426"/>
    </location>
</feature>
<feature type="active site" description="Proton acceptor" evidence="1">
    <location>
        <position position="314"/>
    </location>
</feature>
<feature type="binding site" evidence="1">
    <location>
        <position position="22"/>
    </location>
    <ligand>
        <name>3-phosphoshikimate</name>
        <dbReference type="ChEBI" id="CHEBI:145989"/>
    </ligand>
</feature>
<feature type="binding site" evidence="1">
    <location>
        <position position="22"/>
    </location>
    <ligand>
        <name>phosphoenolpyruvate</name>
        <dbReference type="ChEBI" id="CHEBI:58702"/>
    </ligand>
</feature>
<feature type="binding site" evidence="1">
    <location>
        <position position="23"/>
    </location>
    <ligand>
        <name>3-phosphoshikimate</name>
        <dbReference type="ChEBI" id="CHEBI:145989"/>
    </ligand>
</feature>
<feature type="binding site" evidence="1">
    <location>
        <position position="27"/>
    </location>
    <ligand>
        <name>3-phosphoshikimate</name>
        <dbReference type="ChEBI" id="CHEBI:145989"/>
    </ligand>
</feature>
<feature type="binding site" evidence="1">
    <location>
        <position position="96"/>
    </location>
    <ligand>
        <name>phosphoenolpyruvate</name>
        <dbReference type="ChEBI" id="CHEBI:58702"/>
    </ligand>
</feature>
<feature type="binding site" evidence="1">
    <location>
        <position position="124"/>
    </location>
    <ligand>
        <name>phosphoenolpyruvate</name>
        <dbReference type="ChEBI" id="CHEBI:58702"/>
    </ligand>
</feature>
<feature type="binding site" evidence="1">
    <location>
        <position position="170"/>
    </location>
    <ligand>
        <name>3-phosphoshikimate</name>
        <dbReference type="ChEBI" id="CHEBI:145989"/>
    </ligand>
</feature>
<feature type="binding site" evidence="1">
    <location>
        <position position="171"/>
    </location>
    <ligand>
        <name>3-phosphoshikimate</name>
        <dbReference type="ChEBI" id="CHEBI:145989"/>
    </ligand>
</feature>
<feature type="binding site" evidence="1">
    <location>
        <position position="172"/>
    </location>
    <ligand>
        <name>3-phosphoshikimate</name>
        <dbReference type="ChEBI" id="CHEBI:145989"/>
    </ligand>
</feature>
<feature type="binding site" evidence="1">
    <location>
        <position position="172"/>
    </location>
    <ligand>
        <name>phosphoenolpyruvate</name>
        <dbReference type="ChEBI" id="CHEBI:58702"/>
    </ligand>
</feature>
<feature type="binding site" evidence="1">
    <location>
        <position position="198"/>
    </location>
    <ligand>
        <name>3-phosphoshikimate</name>
        <dbReference type="ChEBI" id="CHEBI:145989"/>
    </ligand>
</feature>
<feature type="binding site" evidence="1">
    <location>
        <position position="314"/>
    </location>
    <ligand>
        <name>3-phosphoshikimate</name>
        <dbReference type="ChEBI" id="CHEBI:145989"/>
    </ligand>
</feature>
<feature type="binding site" evidence="1">
    <location>
        <position position="337"/>
    </location>
    <ligand>
        <name>3-phosphoshikimate</name>
        <dbReference type="ChEBI" id="CHEBI:145989"/>
    </ligand>
</feature>
<feature type="binding site" evidence="1">
    <location>
        <position position="341"/>
    </location>
    <ligand>
        <name>3-phosphoshikimate</name>
        <dbReference type="ChEBI" id="CHEBI:145989"/>
    </ligand>
</feature>
<feature type="binding site" evidence="1">
    <location>
        <position position="345"/>
    </location>
    <ligand>
        <name>phosphoenolpyruvate</name>
        <dbReference type="ChEBI" id="CHEBI:58702"/>
    </ligand>
</feature>
<feature type="binding site" evidence="1">
    <location>
        <position position="387"/>
    </location>
    <ligand>
        <name>phosphoenolpyruvate</name>
        <dbReference type="ChEBI" id="CHEBI:58702"/>
    </ligand>
</feature>
<feature type="binding site" evidence="1">
    <location>
        <position position="412"/>
    </location>
    <ligand>
        <name>phosphoenolpyruvate</name>
        <dbReference type="ChEBI" id="CHEBI:58702"/>
    </ligand>
</feature>
<dbReference type="EC" id="2.5.1.19" evidence="1"/>
<dbReference type="EMBL" id="CP000851">
    <property type="protein sequence ID" value="ABV87391.1"/>
    <property type="molecule type" value="Genomic_DNA"/>
</dbReference>
<dbReference type="RefSeq" id="WP_012155307.1">
    <property type="nucleotide sequence ID" value="NC_009901.1"/>
</dbReference>
<dbReference type="SMR" id="A8H4A4"/>
<dbReference type="STRING" id="398579.Spea_2071"/>
<dbReference type="KEGG" id="spl:Spea_2071"/>
<dbReference type="eggNOG" id="COG0128">
    <property type="taxonomic scope" value="Bacteria"/>
</dbReference>
<dbReference type="HOGENOM" id="CLU_024321_0_0_6"/>
<dbReference type="OrthoDB" id="9809920at2"/>
<dbReference type="UniPathway" id="UPA00053">
    <property type="reaction ID" value="UER00089"/>
</dbReference>
<dbReference type="Proteomes" id="UP000002608">
    <property type="component" value="Chromosome"/>
</dbReference>
<dbReference type="GO" id="GO:0005737">
    <property type="term" value="C:cytoplasm"/>
    <property type="evidence" value="ECO:0007669"/>
    <property type="project" value="UniProtKB-SubCell"/>
</dbReference>
<dbReference type="GO" id="GO:0003866">
    <property type="term" value="F:3-phosphoshikimate 1-carboxyvinyltransferase activity"/>
    <property type="evidence" value="ECO:0007669"/>
    <property type="project" value="UniProtKB-UniRule"/>
</dbReference>
<dbReference type="GO" id="GO:0008652">
    <property type="term" value="P:amino acid biosynthetic process"/>
    <property type="evidence" value="ECO:0007669"/>
    <property type="project" value="UniProtKB-KW"/>
</dbReference>
<dbReference type="GO" id="GO:0009073">
    <property type="term" value="P:aromatic amino acid family biosynthetic process"/>
    <property type="evidence" value="ECO:0007669"/>
    <property type="project" value="UniProtKB-KW"/>
</dbReference>
<dbReference type="GO" id="GO:0009423">
    <property type="term" value="P:chorismate biosynthetic process"/>
    <property type="evidence" value="ECO:0007669"/>
    <property type="project" value="UniProtKB-UniRule"/>
</dbReference>
<dbReference type="CDD" id="cd01556">
    <property type="entry name" value="EPSP_synthase"/>
    <property type="match status" value="1"/>
</dbReference>
<dbReference type="FunFam" id="3.65.10.10:FF:000003">
    <property type="entry name" value="3-phosphoshikimate 1-carboxyvinyltransferase"/>
    <property type="match status" value="1"/>
</dbReference>
<dbReference type="FunFam" id="3.65.10.10:FF:000004">
    <property type="entry name" value="3-phosphoshikimate 1-carboxyvinyltransferase"/>
    <property type="match status" value="1"/>
</dbReference>
<dbReference type="Gene3D" id="3.65.10.10">
    <property type="entry name" value="Enolpyruvate transferase domain"/>
    <property type="match status" value="2"/>
</dbReference>
<dbReference type="HAMAP" id="MF_00210">
    <property type="entry name" value="EPSP_synth"/>
    <property type="match status" value="1"/>
</dbReference>
<dbReference type="InterPro" id="IPR001986">
    <property type="entry name" value="Enolpyruvate_Tfrase_dom"/>
</dbReference>
<dbReference type="InterPro" id="IPR036968">
    <property type="entry name" value="Enolpyruvate_Tfrase_sf"/>
</dbReference>
<dbReference type="InterPro" id="IPR006264">
    <property type="entry name" value="EPSP_synthase"/>
</dbReference>
<dbReference type="InterPro" id="IPR023193">
    <property type="entry name" value="EPSP_synthase_CS"/>
</dbReference>
<dbReference type="InterPro" id="IPR013792">
    <property type="entry name" value="RNA3'P_cycl/enolpyr_Trfase_a/b"/>
</dbReference>
<dbReference type="NCBIfam" id="TIGR01356">
    <property type="entry name" value="aroA"/>
    <property type="match status" value="1"/>
</dbReference>
<dbReference type="PANTHER" id="PTHR21090">
    <property type="entry name" value="AROM/DEHYDROQUINATE SYNTHASE"/>
    <property type="match status" value="1"/>
</dbReference>
<dbReference type="PANTHER" id="PTHR21090:SF5">
    <property type="entry name" value="PENTAFUNCTIONAL AROM POLYPEPTIDE"/>
    <property type="match status" value="1"/>
</dbReference>
<dbReference type="Pfam" id="PF00275">
    <property type="entry name" value="EPSP_synthase"/>
    <property type="match status" value="1"/>
</dbReference>
<dbReference type="PIRSF" id="PIRSF000505">
    <property type="entry name" value="EPSPS"/>
    <property type="match status" value="1"/>
</dbReference>
<dbReference type="SUPFAM" id="SSF55205">
    <property type="entry name" value="EPT/RTPC-like"/>
    <property type="match status" value="1"/>
</dbReference>
<dbReference type="PROSITE" id="PS00104">
    <property type="entry name" value="EPSP_SYNTHASE_1"/>
    <property type="match status" value="1"/>
</dbReference>
<dbReference type="PROSITE" id="PS00885">
    <property type="entry name" value="EPSP_SYNTHASE_2"/>
    <property type="match status" value="1"/>
</dbReference>
<name>AROA_SHEPA</name>
<evidence type="ECO:0000255" key="1">
    <source>
        <dbReference type="HAMAP-Rule" id="MF_00210"/>
    </source>
</evidence>
<reference key="1">
    <citation type="submission" date="2007-10" db="EMBL/GenBank/DDBJ databases">
        <title>Complete sequence of Shewanella pealeana ATCC 700345.</title>
        <authorList>
            <consortium name="US DOE Joint Genome Institute"/>
            <person name="Copeland A."/>
            <person name="Lucas S."/>
            <person name="Lapidus A."/>
            <person name="Barry K."/>
            <person name="Glavina del Rio T."/>
            <person name="Dalin E."/>
            <person name="Tice H."/>
            <person name="Pitluck S."/>
            <person name="Chertkov O."/>
            <person name="Brettin T."/>
            <person name="Bruce D."/>
            <person name="Detter J.C."/>
            <person name="Han C."/>
            <person name="Schmutz J."/>
            <person name="Larimer F."/>
            <person name="Land M."/>
            <person name="Hauser L."/>
            <person name="Kyrpides N."/>
            <person name="Kim E."/>
            <person name="Zhao J.-S.Z."/>
            <person name="Manno D."/>
            <person name="Hawari J."/>
            <person name="Richardson P."/>
        </authorList>
    </citation>
    <scope>NUCLEOTIDE SEQUENCE [LARGE SCALE GENOMIC DNA]</scope>
    <source>
        <strain>ATCC 700345 / ANG-SQ1</strain>
    </source>
</reference>
<comment type="function">
    <text evidence="1">Catalyzes the transfer of the enolpyruvyl moiety of phosphoenolpyruvate (PEP) to the 5-hydroxyl of shikimate-3-phosphate (S3P) to produce enolpyruvyl shikimate-3-phosphate and inorganic phosphate.</text>
</comment>
<comment type="catalytic activity">
    <reaction evidence="1">
        <text>3-phosphoshikimate + phosphoenolpyruvate = 5-O-(1-carboxyvinyl)-3-phosphoshikimate + phosphate</text>
        <dbReference type="Rhea" id="RHEA:21256"/>
        <dbReference type="ChEBI" id="CHEBI:43474"/>
        <dbReference type="ChEBI" id="CHEBI:57701"/>
        <dbReference type="ChEBI" id="CHEBI:58702"/>
        <dbReference type="ChEBI" id="CHEBI:145989"/>
        <dbReference type="EC" id="2.5.1.19"/>
    </reaction>
    <physiologicalReaction direction="left-to-right" evidence="1">
        <dbReference type="Rhea" id="RHEA:21257"/>
    </physiologicalReaction>
</comment>
<comment type="pathway">
    <text evidence="1">Metabolic intermediate biosynthesis; chorismate biosynthesis; chorismate from D-erythrose 4-phosphate and phosphoenolpyruvate: step 6/7.</text>
</comment>
<comment type="subunit">
    <text evidence="1">Monomer.</text>
</comment>
<comment type="subcellular location">
    <subcellularLocation>
        <location evidence="1">Cytoplasm</location>
    </subcellularLocation>
</comment>
<comment type="similarity">
    <text evidence="1">Belongs to the EPSP synthase family.</text>
</comment>
<sequence>MNQLRLEPIKKVSGTINIPGSKSISNRALLLATLAEGTTTLTNLLDSDDIRYMLASLKQLGVSYRLSNNNTVCELDGLAGPLNASEAQTLFLGNAGTAMRPLCAALTLGQGDFTLTGEPRMEERPIGDLVDALRQLGAEVSYLKNDGFPPLSISSTGLNGGNVEIAGDLSSQFLTALLMVAPLAKDDVNIQIKGELVSKPYIDITLALMAQFGVKVQNNDYASFVIKAGQRYVSPGKVLVEGDASSASYFLAAGAIQGGEVKVTGVGKLSIQGDVKFADVLQQMGAEIEWGDDYIISRGAKLTAVDLDMNHIPDAAMTIATTALFATGTTHIRNIYNWRIKETDRLAAMATELRKVGAIVDEGHDYISVTPPAELNTAAIDTYSDHRMAMCFSMMAFADCGITINEPECTSKTFPDYFNQFNSLAH</sequence>
<organism>
    <name type="scientific">Shewanella pealeana (strain ATCC 700345 / ANG-SQ1)</name>
    <dbReference type="NCBI Taxonomy" id="398579"/>
    <lineage>
        <taxon>Bacteria</taxon>
        <taxon>Pseudomonadati</taxon>
        <taxon>Pseudomonadota</taxon>
        <taxon>Gammaproteobacteria</taxon>
        <taxon>Alteromonadales</taxon>
        <taxon>Shewanellaceae</taxon>
        <taxon>Shewanella</taxon>
    </lineage>
</organism>
<keyword id="KW-0028">Amino-acid biosynthesis</keyword>
<keyword id="KW-0057">Aromatic amino acid biosynthesis</keyword>
<keyword id="KW-0963">Cytoplasm</keyword>
<keyword id="KW-1185">Reference proteome</keyword>
<keyword id="KW-0808">Transferase</keyword>
<gene>
    <name evidence="1" type="primary">aroA</name>
    <name type="ordered locus">Spea_2071</name>
</gene>
<protein>
    <recommendedName>
        <fullName evidence="1">3-phosphoshikimate 1-carboxyvinyltransferase</fullName>
        <ecNumber evidence="1">2.5.1.19</ecNumber>
    </recommendedName>
    <alternativeName>
        <fullName evidence="1">5-enolpyruvylshikimate-3-phosphate synthase</fullName>
        <shortName evidence="1">EPSP synthase</shortName>
        <shortName evidence="1">EPSPS</shortName>
    </alternativeName>
</protein>